<dbReference type="EMBL" id="CP000127">
    <property type="protein sequence ID" value="ABA59039.1"/>
    <property type="molecule type" value="Genomic_DNA"/>
</dbReference>
<dbReference type="RefSeq" id="WP_004269163.1">
    <property type="nucleotide sequence ID" value="NC_007484.1"/>
</dbReference>
<dbReference type="SMR" id="Q3J807"/>
<dbReference type="STRING" id="323261.Noc_2586"/>
<dbReference type="KEGG" id="noc:Noc_2586"/>
<dbReference type="eggNOG" id="COG3705">
    <property type="taxonomic scope" value="Bacteria"/>
</dbReference>
<dbReference type="HOGENOM" id="CLU_025113_0_1_6"/>
<dbReference type="InParanoid" id="Q3J807"/>
<dbReference type="UniPathway" id="UPA00031">
    <property type="reaction ID" value="UER00006"/>
</dbReference>
<dbReference type="Proteomes" id="UP000006838">
    <property type="component" value="Chromosome"/>
</dbReference>
<dbReference type="GO" id="GO:0005737">
    <property type="term" value="C:cytoplasm"/>
    <property type="evidence" value="ECO:0007669"/>
    <property type="project" value="UniProtKB-SubCell"/>
</dbReference>
<dbReference type="GO" id="GO:0004821">
    <property type="term" value="F:histidine-tRNA ligase activity"/>
    <property type="evidence" value="ECO:0007669"/>
    <property type="project" value="TreeGrafter"/>
</dbReference>
<dbReference type="GO" id="GO:0006427">
    <property type="term" value="P:histidyl-tRNA aminoacylation"/>
    <property type="evidence" value="ECO:0007669"/>
    <property type="project" value="TreeGrafter"/>
</dbReference>
<dbReference type="GO" id="GO:0000105">
    <property type="term" value="P:L-histidine biosynthetic process"/>
    <property type="evidence" value="ECO:0007669"/>
    <property type="project" value="UniProtKB-UniRule"/>
</dbReference>
<dbReference type="CDD" id="cd00773">
    <property type="entry name" value="HisRS-like_core"/>
    <property type="match status" value="1"/>
</dbReference>
<dbReference type="Gene3D" id="3.30.930.10">
    <property type="entry name" value="Bira Bifunctional Protein, Domain 2"/>
    <property type="match status" value="1"/>
</dbReference>
<dbReference type="HAMAP" id="MF_00125">
    <property type="entry name" value="HisZ"/>
    <property type="match status" value="1"/>
</dbReference>
<dbReference type="InterPro" id="IPR045864">
    <property type="entry name" value="aa-tRNA-synth_II/BPL/LPL"/>
</dbReference>
<dbReference type="InterPro" id="IPR041715">
    <property type="entry name" value="HisRS-like_core"/>
</dbReference>
<dbReference type="InterPro" id="IPR004516">
    <property type="entry name" value="HisRS/HisZ"/>
</dbReference>
<dbReference type="InterPro" id="IPR004517">
    <property type="entry name" value="HisZ"/>
</dbReference>
<dbReference type="NCBIfam" id="TIGR00443">
    <property type="entry name" value="hisZ_biosyn_reg"/>
    <property type="match status" value="1"/>
</dbReference>
<dbReference type="NCBIfam" id="NF008935">
    <property type="entry name" value="PRK12292.1-1"/>
    <property type="match status" value="1"/>
</dbReference>
<dbReference type="NCBIfam" id="NF009086">
    <property type="entry name" value="PRK12421.1"/>
    <property type="match status" value="1"/>
</dbReference>
<dbReference type="PANTHER" id="PTHR43707:SF1">
    <property type="entry name" value="HISTIDINE--TRNA LIGASE, MITOCHONDRIAL-RELATED"/>
    <property type="match status" value="1"/>
</dbReference>
<dbReference type="PANTHER" id="PTHR43707">
    <property type="entry name" value="HISTIDYL-TRNA SYNTHETASE"/>
    <property type="match status" value="1"/>
</dbReference>
<dbReference type="Pfam" id="PF13393">
    <property type="entry name" value="tRNA-synt_His"/>
    <property type="match status" value="1"/>
</dbReference>
<dbReference type="PIRSF" id="PIRSF001549">
    <property type="entry name" value="His-tRNA_synth"/>
    <property type="match status" value="1"/>
</dbReference>
<dbReference type="SUPFAM" id="SSF55681">
    <property type="entry name" value="Class II aaRS and biotin synthetases"/>
    <property type="match status" value="1"/>
</dbReference>
<gene>
    <name evidence="1" type="primary">hisZ</name>
    <name type="ordered locus">Noc_2586</name>
</gene>
<sequence>MPITERWLLPEGVGELLPIEAEQMERARRVLIDLFHSWGYDLVVPPLIEYLESLLTGVGTDLELQTFKLTDQLTGRLMGVRADITPQVARIAAHCIQRKGVTRLCYIGSVLHTLSQGLGGTRNPIQVGAELYGHSGTESDLEVLRLALEALDVVGVKQVHLDLGHVGIFRDLVLQANLSPEEEYGLFNILQRKARDEIDTMLRNRDVGPQLRHMFMALTSLNGGREVLDEAEQVLAGSGVEQALTTLKEVATLTDKYLPRVPMHFDLGELRGYRYHTGLVFAAYIPGRGQAVAQGGRYDDIGQVFGRAQPATGFSMDLKELVTLGSSTTTTRLGIFAPWSEAPGFEREVARLRQQGERVVYGFPDTVSNYDELGCDRELVLKAKQWQIIEIRKLGRG</sequence>
<keyword id="KW-0028">Amino-acid biosynthesis</keyword>
<keyword id="KW-0963">Cytoplasm</keyword>
<keyword id="KW-0368">Histidine biosynthesis</keyword>
<keyword id="KW-1185">Reference proteome</keyword>
<evidence type="ECO:0000255" key="1">
    <source>
        <dbReference type="HAMAP-Rule" id="MF_00125"/>
    </source>
</evidence>
<name>HISZ_NITOC</name>
<comment type="function">
    <text evidence="1">Required for the first step of histidine biosynthesis. May allow the feedback regulation of ATP phosphoribosyltransferase activity by histidine.</text>
</comment>
<comment type="pathway">
    <text evidence="1">Amino-acid biosynthesis; L-histidine biosynthesis; L-histidine from 5-phospho-alpha-D-ribose 1-diphosphate: step 1/9.</text>
</comment>
<comment type="subunit">
    <text evidence="1">Heteromultimer composed of HisG and HisZ subunits.</text>
</comment>
<comment type="subcellular location">
    <subcellularLocation>
        <location evidence="1">Cytoplasm</location>
    </subcellularLocation>
</comment>
<comment type="miscellaneous">
    <text>This function is generally fulfilled by the C-terminal part of HisG, which is missing in some bacteria such as this one.</text>
</comment>
<comment type="similarity">
    <text evidence="1">Belongs to the class-II aminoacyl-tRNA synthetase family. HisZ subfamily.</text>
</comment>
<organism>
    <name type="scientific">Nitrosococcus oceani (strain ATCC 19707 / BCRC 17464 / JCM 30415 / NCIMB 11848 / C-107)</name>
    <dbReference type="NCBI Taxonomy" id="323261"/>
    <lineage>
        <taxon>Bacteria</taxon>
        <taxon>Pseudomonadati</taxon>
        <taxon>Pseudomonadota</taxon>
        <taxon>Gammaproteobacteria</taxon>
        <taxon>Chromatiales</taxon>
        <taxon>Chromatiaceae</taxon>
        <taxon>Nitrosococcus</taxon>
    </lineage>
</organism>
<accession>Q3J807</accession>
<reference key="1">
    <citation type="journal article" date="2006" name="Appl. Environ. Microbiol.">
        <title>Complete genome sequence of the marine, chemolithoautotrophic, ammonia-oxidizing bacterium Nitrosococcus oceani ATCC 19707.</title>
        <authorList>
            <person name="Klotz M.G."/>
            <person name="Arp D.J."/>
            <person name="Chain P.S.G."/>
            <person name="El-Sheikh A.F."/>
            <person name="Hauser L.J."/>
            <person name="Hommes N.G."/>
            <person name="Larimer F.W."/>
            <person name="Malfatti S.A."/>
            <person name="Norton J.M."/>
            <person name="Poret-Peterson A.T."/>
            <person name="Vergez L.M."/>
            <person name="Ward B.B."/>
        </authorList>
    </citation>
    <scope>NUCLEOTIDE SEQUENCE [LARGE SCALE GENOMIC DNA]</scope>
    <source>
        <strain>ATCC 19707 / BCRC 17464 / JCM 30415 / NCIMB 11848 / C-107</strain>
    </source>
</reference>
<feature type="chain" id="PRO_0000242843" description="ATP phosphoribosyltransferase regulatory subunit">
    <location>
        <begin position="1"/>
        <end position="397"/>
    </location>
</feature>
<proteinExistence type="inferred from homology"/>
<protein>
    <recommendedName>
        <fullName evidence="1">ATP phosphoribosyltransferase regulatory subunit</fullName>
    </recommendedName>
</protein>